<proteinExistence type="inferred from homology"/>
<reference key="1">
    <citation type="journal article" date="2005" name="J. Bacteriol.">
        <title>Completion of the genome sequence of Brucella abortus and comparison to the highly similar genomes of Brucella melitensis and Brucella suis.</title>
        <authorList>
            <person name="Halling S.M."/>
            <person name="Peterson-Burch B.D."/>
            <person name="Bricker B.J."/>
            <person name="Zuerner R.L."/>
            <person name="Qing Z."/>
            <person name="Li L.-L."/>
            <person name="Kapur V."/>
            <person name="Alt D.P."/>
            <person name="Olsen S.C."/>
        </authorList>
    </citation>
    <scope>NUCLEOTIDE SEQUENCE [LARGE SCALE GENOMIC DNA]</scope>
    <source>
        <strain>9-941</strain>
    </source>
</reference>
<dbReference type="EC" id="6.5.1.2" evidence="1"/>
<dbReference type="EMBL" id="AE017223">
    <property type="protein sequence ID" value="AAX74745.1"/>
    <property type="molecule type" value="Genomic_DNA"/>
</dbReference>
<dbReference type="RefSeq" id="WP_002964528.1">
    <property type="nucleotide sequence ID" value="NC_006932.1"/>
</dbReference>
<dbReference type="SMR" id="Q57C89"/>
<dbReference type="EnsemblBacteria" id="AAX74745">
    <property type="protein sequence ID" value="AAX74745"/>
    <property type="gene ID" value="BruAb1_1415"/>
</dbReference>
<dbReference type="GeneID" id="93016281"/>
<dbReference type="KEGG" id="bmb:BruAb1_1415"/>
<dbReference type="HOGENOM" id="CLU_007764_2_0_5"/>
<dbReference type="Proteomes" id="UP000000540">
    <property type="component" value="Chromosome I"/>
</dbReference>
<dbReference type="GO" id="GO:0005829">
    <property type="term" value="C:cytosol"/>
    <property type="evidence" value="ECO:0007669"/>
    <property type="project" value="TreeGrafter"/>
</dbReference>
<dbReference type="GO" id="GO:0003911">
    <property type="term" value="F:DNA ligase (NAD+) activity"/>
    <property type="evidence" value="ECO:0007669"/>
    <property type="project" value="UniProtKB-UniRule"/>
</dbReference>
<dbReference type="GO" id="GO:0046872">
    <property type="term" value="F:metal ion binding"/>
    <property type="evidence" value="ECO:0007669"/>
    <property type="project" value="UniProtKB-KW"/>
</dbReference>
<dbReference type="GO" id="GO:0006281">
    <property type="term" value="P:DNA repair"/>
    <property type="evidence" value="ECO:0007669"/>
    <property type="project" value="UniProtKB-KW"/>
</dbReference>
<dbReference type="GO" id="GO:0006260">
    <property type="term" value="P:DNA replication"/>
    <property type="evidence" value="ECO:0007669"/>
    <property type="project" value="UniProtKB-KW"/>
</dbReference>
<dbReference type="CDD" id="cd17748">
    <property type="entry name" value="BRCT_DNA_ligase_like"/>
    <property type="match status" value="1"/>
</dbReference>
<dbReference type="CDD" id="cd00114">
    <property type="entry name" value="LIGANc"/>
    <property type="match status" value="1"/>
</dbReference>
<dbReference type="FunFam" id="3.30.470.30:FF:000001">
    <property type="entry name" value="DNA ligase"/>
    <property type="match status" value="1"/>
</dbReference>
<dbReference type="Gene3D" id="6.20.10.30">
    <property type="match status" value="1"/>
</dbReference>
<dbReference type="Gene3D" id="1.10.150.20">
    <property type="entry name" value="5' to 3' exonuclease, C-terminal subdomain"/>
    <property type="match status" value="2"/>
</dbReference>
<dbReference type="Gene3D" id="3.40.50.10190">
    <property type="entry name" value="BRCT domain"/>
    <property type="match status" value="1"/>
</dbReference>
<dbReference type="Gene3D" id="3.30.470.30">
    <property type="entry name" value="DNA ligase/mRNA capping enzyme"/>
    <property type="match status" value="1"/>
</dbReference>
<dbReference type="Gene3D" id="1.10.287.610">
    <property type="entry name" value="Helix hairpin bin"/>
    <property type="match status" value="1"/>
</dbReference>
<dbReference type="Gene3D" id="2.40.50.140">
    <property type="entry name" value="Nucleic acid-binding proteins"/>
    <property type="match status" value="1"/>
</dbReference>
<dbReference type="HAMAP" id="MF_01588">
    <property type="entry name" value="DNA_ligase_A"/>
    <property type="match status" value="1"/>
</dbReference>
<dbReference type="InterPro" id="IPR001357">
    <property type="entry name" value="BRCT_dom"/>
</dbReference>
<dbReference type="InterPro" id="IPR036420">
    <property type="entry name" value="BRCT_dom_sf"/>
</dbReference>
<dbReference type="InterPro" id="IPR041663">
    <property type="entry name" value="DisA/LigA_HHH"/>
</dbReference>
<dbReference type="InterPro" id="IPR001679">
    <property type="entry name" value="DNA_ligase"/>
</dbReference>
<dbReference type="InterPro" id="IPR018239">
    <property type="entry name" value="DNA_ligase_AS"/>
</dbReference>
<dbReference type="InterPro" id="IPR033136">
    <property type="entry name" value="DNA_ligase_CS"/>
</dbReference>
<dbReference type="InterPro" id="IPR013839">
    <property type="entry name" value="DNAligase_adenylation"/>
</dbReference>
<dbReference type="InterPro" id="IPR013840">
    <property type="entry name" value="DNAligase_N"/>
</dbReference>
<dbReference type="InterPro" id="IPR012340">
    <property type="entry name" value="NA-bd_OB-fold"/>
</dbReference>
<dbReference type="InterPro" id="IPR004150">
    <property type="entry name" value="NAD_DNA_ligase_OB"/>
</dbReference>
<dbReference type="InterPro" id="IPR010994">
    <property type="entry name" value="RuvA_2-like"/>
</dbReference>
<dbReference type="InterPro" id="IPR004149">
    <property type="entry name" value="Znf_DNAligase_C4"/>
</dbReference>
<dbReference type="NCBIfam" id="TIGR00575">
    <property type="entry name" value="dnlj"/>
    <property type="match status" value="1"/>
</dbReference>
<dbReference type="NCBIfam" id="NF005932">
    <property type="entry name" value="PRK07956.1"/>
    <property type="match status" value="1"/>
</dbReference>
<dbReference type="PANTHER" id="PTHR23389">
    <property type="entry name" value="CHROMOSOME TRANSMISSION FIDELITY FACTOR 18"/>
    <property type="match status" value="1"/>
</dbReference>
<dbReference type="PANTHER" id="PTHR23389:SF9">
    <property type="entry name" value="DNA LIGASE"/>
    <property type="match status" value="1"/>
</dbReference>
<dbReference type="Pfam" id="PF00533">
    <property type="entry name" value="BRCT"/>
    <property type="match status" value="1"/>
</dbReference>
<dbReference type="Pfam" id="PF01653">
    <property type="entry name" value="DNA_ligase_aden"/>
    <property type="match status" value="1"/>
</dbReference>
<dbReference type="Pfam" id="PF03120">
    <property type="entry name" value="DNA_ligase_OB"/>
    <property type="match status" value="1"/>
</dbReference>
<dbReference type="Pfam" id="PF03119">
    <property type="entry name" value="DNA_ligase_ZBD"/>
    <property type="match status" value="1"/>
</dbReference>
<dbReference type="Pfam" id="PF12826">
    <property type="entry name" value="HHH_2"/>
    <property type="match status" value="1"/>
</dbReference>
<dbReference type="PIRSF" id="PIRSF001604">
    <property type="entry name" value="LigA"/>
    <property type="match status" value="1"/>
</dbReference>
<dbReference type="SMART" id="SM00292">
    <property type="entry name" value="BRCT"/>
    <property type="match status" value="1"/>
</dbReference>
<dbReference type="SMART" id="SM00532">
    <property type="entry name" value="LIGANc"/>
    <property type="match status" value="1"/>
</dbReference>
<dbReference type="SUPFAM" id="SSF52113">
    <property type="entry name" value="BRCT domain"/>
    <property type="match status" value="1"/>
</dbReference>
<dbReference type="SUPFAM" id="SSF56091">
    <property type="entry name" value="DNA ligase/mRNA capping enzyme, catalytic domain"/>
    <property type="match status" value="1"/>
</dbReference>
<dbReference type="SUPFAM" id="SSF50249">
    <property type="entry name" value="Nucleic acid-binding proteins"/>
    <property type="match status" value="1"/>
</dbReference>
<dbReference type="SUPFAM" id="SSF47781">
    <property type="entry name" value="RuvA domain 2-like"/>
    <property type="match status" value="1"/>
</dbReference>
<dbReference type="PROSITE" id="PS50172">
    <property type="entry name" value="BRCT"/>
    <property type="match status" value="1"/>
</dbReference>
<dbReference type="PROSITE" id="PS01055">
    <property type="entry name" value="DNA_LIGASE_N1"/>
    <property type="match status" value="1"/>
</dbReference>
<dbReference type="PROSITE" id="PS01056">
    <property type="entry name" value="DNA_LIGASE_N2"/>
    <property type="match status" value="1"/>
</dbReference>
<comment type="function">
    <text evidence="1">DNA ligase that catalyzes the formation of phosphodiester linkages between 5'-phosphoryl and 3'-hydroxyl groups in double-stranded DNA using NAD as a coenzyme and as the energy source for the reaction. It is essential for DNA replication and repair of damaged DNA.</text>
</comment>
<comment type="catalytic activity">
    <reaction evidence="1">
        <text>NAD(+) + (deoxyribonucleotide)n-3'-hydroxyl + 5'-phospho-(deoxyribonucleotide)m = (deoxyribonucleotide)n+m + AMP + beta-nicotinamide D-nucleotide.</text>
        <dbReference type="EC" id="6.5.1.2"/>
    </reaction>
</comment>
<comment type="cofactor">
    <cofactor evidence="1">
        <name>Mg(2+)</name>
        <dbReference type="ChEBI" id="CHEBI:18420"/>
    </cofactor>
    <cofactor evidence="1">
        <name>Mn(2+)</name>
        <dbReference type="ChEBI" id="CHEBI:29035"/>
    </cofactor>
</comment>
<comment type="similarity">
    <text evidence="1">Belongs to the NAD-dependent DNA ligase family. LigA subfamily.</text>
</comment>
<accession>Q57C89</accession>
<gene>
    <name evidence="1" type="primary">ligA</name>
    <name type="ordered locus">BruAb1_1415</name>
</gene>
<name>DNLJ_BRUAB</name>
<evidence type="ECO:0000255" key="1">
    <source>
        <dbReference type="HAMAP-Rule" id="MF_01588"/>
    </source>
</evidence>
<organism>
    <name type="scientific">Brucella abortus biovar 1 (strain 9-941)</name>
    <dbReference type="NCBI Taxonomy" id="262698"/>
    <lineage>
        <taxon>Bacteria</taxon>
        <taxon>Pseudomonadati</taxon>
        <taxon>Pseudomonadota</taxon>
        <taxon>Alphaproteobacteria</taxon>
        <taxon>Hyphomicrobiales</taxon>
        <taxon>Brucellaceae</taxon>
        <taxon>Brucella/Ochrobactrum group</taxon>
        <taxon>Brucella</taxon>
    </lineage>
</organism>
<keyword id="KW-0227">DNA damage</keyword>
<keyword id="KW-0234">DNA repair</keyword>
<keyword id="KW-0235">DNA replication</keyword>
<keyword id="KW-0436">Ligase</keyword>
<keyword id="KW-0460">Magnesium</keyword>
<keyword id="KW-0464">Manganese</keyword>
<keyword id="KW-0479">Metal-binding</keyword>
<keyword id="KW-0520">NAD</keyword>
<keyword id="KW-0862">Zinc</keyword>
<feature type="chain" id="PRO_0000313152" description="DNA ligase">
    <location>
        <begin position="1"/>
        <end position="719"/>
    </location>
</feature>
<feature type="domain" description="BRCT" evidence="1">
    <location>
        <begin position="640"/>
        <end position="719"/>
    </location>
</feature>
<feature type="active site" description="N6-AMP-lysine intermediate" evidence="1">
    <location>
        <position position="128"/>
    </location>
</feature>
<feature type="binding site" evidence="1">
    <location>
        <begin position="42"/>
        <end position="46"/>
    </location>
    <ligand>
        <name>NAD(+)</name>
        <dbReference type="ChEBI" id="CHEBI:57540"/>
    </ligand>
</feature>
<feature type="binding site" evidence="1">
    <location>
        <begin position="92"/>
        <end position="93"/>
    </location>
    <ligand>
        <name>NAD(+)</name>
        <dbReference type="ChEBI" id="CHEBI:57540"/>
    </ligand>
</feature>
<feature type="binding site" evidence="1">
    <location>
        <position position="126"/>
    </location>
    <ligand>
        <name>NAD(+)</name>
        <dbReference type="ChEBI" id="CHEBI:57540"/>
    </ligand>
</feature>
<feature type="binding site" evidence="1">
    <location>
        <position position="149"/>
    </location>
    <ligand>
        <name>NAD(+)</name>
        <dbReference type="ChEBI" id="CHEBI:57540"/>
    </ligand>
</feature>
<feature type="binding site" evidence="1">
    <location>
        <position position="185"/>
    </location>
    <ligand>
        <name>NAD(+)</name>
        <dbReference type="ChEBI" id="CHEBI:57540"/>
    </ligand>
</feature>
<feature type="binding site" evidence="1">
    <location>
        <position position="301"/>
    </location>
    <ligand>
        <name>NAD(+)</name>
        <dbReference type="ChEBI" id="CHEBI:57540"/>
    </ligand>
</feature>
<feature type="binding site" evidence="1">
    <location>
        <position position="325"/>
    </location>
    <ligand>
        <name>NAD(+)</name>
        <dbReference type="ChEBI" id="CHEBI:57540"/>
    </ligand>
</feature>
<feature type="binding site" evidence="1">
    <location>
        <position position="430"/>
    </location>
    <ligand>
        <name>Zn(2+)</name>
        <dbReference type="ChEBI" id="CHEBI:29105"/>
    </ligand>
</feature>
<feature type="binding site" evidence="1">
    <location>
        <position position="433"/>
    </location>
    <ligand>
        <name>Zn(2+)</name>
        <dbReference type="ChEBI" id="CHEBI:29105"/>
    </ligand>
</feature>
<feature type="binding site" evidence="1">
    <location>
        <position position="448"/>
    </location>
    <ligand>
        <name>Zn(2+)</name>
        <dbReference type="ChEBI" id="CHEBI:29105"/>
    </ligand>
</feature>
<feature type="binding site" evidence="1">
    <location>
        <position position="454"/>
    </location>
    <ligand>
        <name>Zn(2+)</name>
        <dbReference type="ChEBI" id="CHEBI:29105"/>
    </ligand>
</feature>
<sequence length="719" mass="78681">MSDISVEKLTELEAAAELERLARAIAHHDELYHAKDRPEISDAAYDALKRRNEAIEAHFPALVRDDSPSRRVGAAPALATFAPVVHARPMLSLDNAFSDEDVRDFVGSVYRFLGQLPDDSIAFTAEPKIDGLSMSIRYENGILVSGATRGDGTTGENVTANIRTIAEIPNRLPAGAPAVVEVRGEVYMAKSDFLTLNAQMEAEGKQTYVNPRNTAAGSLRQLDAKVTASRKLRFFAYAWGEMSDMPADTQLGMVEVFRQWGFPVNPLMKRFNSVDGLLAHYRAIGMERPTLDYDIDGVVYKVDRLDLQTRLGFRSRSPRWAIAHKFPAEQALTILRGIDIQVGRTGALTPVARLEPITVGGVVVTNATLHNEDYIKGIGQKGEPIREGRDIRIGDSVIVQRAGDVIPQIVDVVLEEGKKRGEPYQFPHVCPACGSHAVREEGEAVRRCTGGLICPAQAVERIRHFVSRNAFDIEGLGEKQVEFFFNAEDPALCIRSPADIFTLKKRQENSLTKLQNIEGFGATSVKKLYDAIDARREIALHRFLFGLGIRHVGEVNAKRLARAYLSYAAFEKAALEAVPPKEGDRTDKGSEAWQDMLAVEGIGSIVAEAVVDFYGEPHNREVLAALLAEVTPLDEEARVATGSPVEGKTVVFTGSLERMSRDEAKAMAERHGAKTAGSVSKKTDLVVAGPGAGSKLAKATELGIEVINEDDWFKLVGED</sequence>
<protein>
    <recommendedName>
        <fullName evidence="1">DNA ligase</fullName>
        <ecNumber evidence="1">6.5.1.2</ecNumber>
    </recommendedName>
    <alternativeName>
        <fullName evidence="1">Polydeoxyribonucleotide synthase [NAD(+)]</fullName>
    </alternativeName>
</protein>